<gene>
    <name evidence="1" type="primary">gpsA</name>
    <name type="ordered locus">Shewmr7_0046</name>
</gene>
<reference key="1">
    <citation type="submission" date="2006-08" db="EMBL/GenBank/DDBJ databases">
        <title>Complete sequence of chromosome 1 of Shewanella sp. MR-7.</title>
        <authorList>
            <person name="Copeland A."/>
            <person name="Lucas S."/>
            <person name="Lapidus A."/>
            <person name="Barry K."/>
            <person name="Detter J.C."/>
            <person name="Glavina del Rio T."/>
            <person name="Hammon N."/>
            <person name="Israni S."/>
            <person name="Dalin E."/>
            <person name="Tice H."/>
            <person name="Pitluck S."/>
            <person name="Kiss H."/>
            <person name="Brettin T."/>
            <person name="Bruce D."/>
            <person name="Han C."/>
            <person name="Tapia R."/>
            <person name="Gilna P."/>
            <person name="Schmutz J."/>
            <person name="Larimer F."/>
            <person name="Land M."/>
            <person name="Hauser L."/>
            <person name="Kyrpides N."/>
            <person name="Mikhailova N."/>
            <person name="Nealson K."/>
            <person name="Konstantinidis K."/>
            <person name="Klappenbach J."/>
            <person name="Tiedje J."/>
            <person name="Richardson P."/>
        </authorList>
    </citation>
    <scope>NUCLEOTIDE SEQUENCE [LARGE SCALE GENOMIC DNA]</scope>
    <source>
        <strain>MR-7</strain>
    </source>
</reference>
<feature type="chain" id="PRO_1000049555" description="Glycerol-3-phosphate dehydrogenase [NAD(P)+]">
    <location>
        <begin position="1"/>
        <end position="338"/>
    </location>
</feature>
<feature type="active site" description="Proton acceptor" evidence="1">
    <location>
        <position position="194"/>
    </location>
</feature>
<feature type="binding site" evidence="1">
    <location>
        <position position="14"/>
    </location>
    <ligand>
        <name>NADPH</name>
        <dbReference type="ChEBI" id="CHEBI:57783"/>
    </ligand>
</feature>
<feature type="binding site" evidence="1">
    <location>
        <position position="15"/>
    </location>
    <ligand>
        <name>NADPH</name>
        <dbReference type="ChEBI" id="CHEBI:57783"/>
    </ligand>
</feature>
<feature type="binding site" evidence="1">
    <location>
        <position position="35"/>
    </location>
    <ligand>
        <name>NADPH</name>
        <dbReference type="ChEBI" id="CHEBI:57783"/>
    </ligand>
</feature>
<feature type="binding site" evidence="1">
    <location>
        <position position="109"/>
    </location>
    <ligand>
        <name>NADPH</name>
        <dbReference type="ChEBI" id="CHEBI:57783"/>
    </ligand>
</feature>
<feature type="binding site" evidence="1">
    <location>
        <position position="109"/>
    </location>
    <ligand>
        <name>sn-glycerol 3-phosphate</name>
        <dbReference type="ChEBI" id="CHEBI:57597"/>
    </ligand>
</feature>
<feature type="binding site" evidence="1">
    <location>
        <position position="138"/>
    </location>
    <ligand>
        <name>sn-glycerol 3-phosphate</name>
        <dbReference type="ChEBI" id="CHEBI:57597"/>
    </ligand>
</feature>
<feature type="binding site" evidence="1">
    <location>
        <position position="140"/>
    </location>
    <ligand>
        <name>sn-glycerol 3-phosphate</name>
        <dbReference type="ChEBI" id="CHEBI:57597"/>
    </ligand>
</feature>
<feature type="binding site" evidence="1">
    <location>
        <position position="142"/>
    </location>
    <ligand>
        <name>NADPH</name>
        <dbReference type="ChEBI" id="CHEBI:57783"/>
    </ligand>
</feature>
<feature type="binding site" evidence="1">
    <location>
        <position position="194"/>
    </location>
    <ligand>
        <name>sn-glycerol 3-phosphate</name>
        <dbReference type="ChEBI" id="CHEBI:57597"/>
    </ligand>
</feature>
<feature type="binding site" evidence="1">
    <location>
        <position position="247"/>
    </location>
    <ligand>
        <name>sn-glycerol 3-phosphate</name>
        <dbReference type="ChEBI" id="CHEBI:57597"/>
    </ligand>
</feature>
<feature type="binding site" evidence="1">
    <location>
        <position position="257"/>
    </location>
    <ligand>
        <name>sn-glycerol 3-phosphate</name>
        <dbReference type="ChEBI" id="CHEBI:57597"/>
    </ligand>
</feature>
<feature type="binding site" evidence="1">
    <location>
        <position position="258"/>
    </location>
    <ligand>
        <name>NADPH</name>
        <dbReference type="ChEBI" id="CHEBI:57783"/>
    </ligand>
</feature>
<feature type="binding site" evidence="1">
    <location>
        <position position="258"/>
    </location>
    <ligand>
        <name>sn-glycerol 3-phosphate</name>
        <dbReference type="ChEBI" id="CHEBI:57597"/>
    </ligand>
</feature>
<feature type="binding site" evidence="1">
    <location>
        <position position="259"/>
    </location>
    <ligand>
        <name>sn-glycerol 3-phosphate</name>
        <dbReference type="ChEBI" id="CHEBI:57597"/>
    </ligand>
</feature>
<feature type="binding site" evidence="1">
    <location>
        <position position="282"/>
    </location>
    <ligand>
        <name>NADPH</name>
        <dbReference type="ChEBI" id="CHEBI:57783"/>
    </ligand>
</feature>
<feature type="binding site" evidence="1">
    <location>
        <position position="284"/>
    </location>
    <ligand>
        <name>NADPH</name>
        <dbReference type="ChEBI" id="CHEBI:57783"/>
    </ligand>
</feature>
<evidence type="ECO:0000255" key="1">
    <source>
        <dbReference type="HAMAP-Rule" id="MF_00394"/>
    </source>
</evidence>
<dbReference type="EC" id="1.1.1.94" evidence="1"/>
<dbReference type="EMBL" id="CP000444">
    <property type="protein sequence ID" value="ABI41052.1"/>
    <property type="molecule type" value="Genomic_DNA"/>
</dbReference>
<dbReference type="SMR" id="Q0I0Q3"/>
<dbReference type="KEGG" id="shm:Shewmr7_0046"/>
<dbReference type="HOGENOM" id="CLU_033449_0_2_6"/>
<dbReference type="UniPathway" id="UPA00940"/>
<dbReference type="GO" id="GO:0005829">
    <property type="term" value="C:cytosol"/>
    <property type="evidence" value="ECO:0007669"/>
    <property type="project" value="TreeGrafter"/>
</dbReference>
<dbReference type="GO" id="GO:0047952">
    <property type="term" value="F:glycerol-3-phosphate dehydrogenase [NAD(P)+] activity"/>
    <property type="evidence" value="ECO:0007669"/>
    <property type="project" value="UniProtKB-UniRule"/>
</dbReference>
<dbReference type="GO" id="GO:0051287">
    <property type="term" value="F:NAD binding"/>
    <property type="evidence" value="ECO:0007669"/>
    <property type="project" value="InterPro"/>
</dbReference>
<dbReference type="GO" id="GO:0005975">
    <property type="term" value="P:carbohydrate metabolic process"/>
    <property type="evidence" value="ECO:0007669"/>
    <property type="project" value="InterPro"/>
</dbReference>
<dbReference type="GO" id="GO:0046167">
    <property type="term" value="P:glycerol-3-phosphate biosynthetic process"/>
    <property type="evidence" value="ECO:0007669"/>
    <property type="project" value="UniProtKB-UniRule"/>
</dbReference>
<dbReference type="GO" id="GO:0046168">
    <property type="term" value="P:glycerol-3-phosphate catabolic process"/>
    <property type="evidence" value="ECO:0007669"/>
    <property type="project" value="InterPro"/>
</dbReference>
<dbReference type="GO" id="GO:0046474">
    <property type="term" value="P:glycerophospholipid biosynthetic process"/>
    <property type="evidence" value="ECO:0007669"/>
    <property type="project" value="TreeGrafter"/>
</dbReference>
<dbReference type="FunFam" id="1.10.1040.10:FF:000001">
    <property type="entry name" value="Glycerol-3-phosphate dehydrogenase [NAD(P)+]"/>
    <property type="match status" value="1"/>
</dbReference>
<dbReference type="FunFam" id="3.40.50.720:FF:000019">
    <property type="entry name" value="Glycerol-3-phosphate dehydrogenase [NAD(P)+]"/>
    <property type="match status" value="1"/>
</dbReference>
<dbReference type="Gene3D" id="1.10.1040.10">
    <property type="entry name" value="N-(1-d-carboxylethyl)-l-norvaline Dehydrogenase, domain 2"/>
    <property type="match status" value="1"/>
</dbReference>
<dbReference type="Gene3D" id="3.40.50.720">
    <property type="entry name" value="NAD(P)-binding Rossmann-like Domain"/>
    <property type="match status" value="1"/>
</dbReference>
<dbReference type="HAMAP" id="MF_00394">
    <property type="entry name" value="NAD_Glyc3P_dehydrog"/>
    <property type="match status" value="1"/>
</dbReference>
<dbReference type="InterPro" id="IPR008927">
    <property type="entry name" value="6-PGluconate_DH-like_C_sf"/>
</dbReference>
<dbReference type="InterPro" id="IPR013328">
    <property type="entry name" value="6PGD_dom2"/>
</dbReference>
<dbReference type="InterPro" id="IPR006168">
    <property type="entry name" value="G3P_DH_NAD-dep"/>
</dbReference>
<dbReference type="InterPro" id="IPR006109">
    <property type="entry name" value="G3P_DH_NAD-dep_C"/>
</dbReference>
<dbReference type="InterPro" id="IPR011128">
    <property type="entry name" value="G3P_DH_NAD-dep_N"/>
</dbReference>
<dbReference type="InterPro" id="IPR036291">
    <property type="entry name" value="NAD(P)-bd_dom_sf"/>
</dbReference>
<dbReference type="NCBIfam" id="NF000939">
    <property type="entry name" value="PRK00094.1-1"/>
    <property type="match status" value="1"/>
</dbReference>
<dbReference type="NCBIfam" id="NF000940">
    <property type="entry name" value="PRK00094.1-2"/>
    <property type="match status" value="1"/>
</dbReference>
<dbReference type="NCBIfam" id="NF000942">
    <property type="entry name" value="PRK00094.1-4"/>
    <property type="match status" value="1"/>
</dbReference>
<dbReference type="PANTHER" id="PTHR11728">
    <property type="entry name" value="GLYCEROL-3-PHOSPHATE DEHYDROGENASE"/>
    <property type="match status" value="1"/>
</dbReference>
<dbReference type="PANTHER" id="PTHR11728:SF1">
    <property type="entry name" value="GLYCEROL-3-PHOSPHATE DEHYDROGENASE [NAD(+)] 2, CHLOROPLASTIC"/>
    <property type="match status" value="1"/>
</dbReference>
<dbReference type="Pfam" id="PF07479">
    <property type="entry name" value="NAD_Gly3P_dh_C"/>
    <property type="match status" value="1"/>
</dbReference>
<dbReference type="Pfam" id="PF01210">
    <property type="entry name" value="NAD_Gly3P_dh_N"/>
    <property type="match status" value="1"/>
</dbReference>
<dbReference type="PIRSF" id="PIRSF000114">
    <property type="entry name" value="Glycerol-3-P_dh"/>
    <property type="match status" value="1"/>
</dbReference>
<dbReference type="PRINTS" id="PR00077">
    <property type="entry name" value="GPDHDRGNASE"/>
</dbReference>
<dbReference type="SUPFAM" id="SSF48179">
    <property type="entry name" value="6-phosphogluconate dehydrogenase C-terminal domain-like"/>
    <property type="match status" value="1"/>
</dbReference>
<dbReference type="SUPFAM" id="SSF51735">
    <property type="entry name" value="NAD(P)-binding Rossmann-fold domains"/>
    <property type="match status" value="1"/>
</dbReference>
<dbReference type="PROSITE" id="PS00957">
    <property type="entry name" value="NAD_G3PDH"/>
    <property type="match status" value="1"/>
</dbReference>
<comment type="function">
    <text evidence="1">Catalyzes the reduction of the glycolytic intermediate dihydroxyacetone phosphate (DHAP) to sn-glycerol 3-phosphate (G3P), the key precursor for phospholipid synthesis.</text>
</comment>
<comment type="catalytic activity">
    <reaction evidence="1">
        <text>sn-glycerol 3-phosphate + NAD(+) = dihydroxyacetone phosphate + NADH + H(+)</text>
        <dbReference type="Rhea" id="RHEA:11092"/>
        <dbReference type="ChEBI" id="CHEBI:15378"/>
        <dbReference type="ChEBI" id="CHEBI:57540"/>
        <dbReference type="ChEBI" id="CHEBI:57597"/>
        <dbReference type="ChEBI" id="CHEBI:57642"/>
        <dbReference type="ChEBI" id="CHEBI:57945"/>
        <dbReference type="EC" id="1.1.1.94"/>
    </reaction>
    <physiologicalReaction direction="right-to-left" evidence="1">
        <dbReference type="Rhea" id="RHEA:11094"/>
    </physiologicalReaction>
</comment>
<comment type="catalytic activity">
    <reaction evidence="1">
        <text>sn-glycerol 3-phosphate + NADP(+) = dihydroxyacetone phosphate + NADPH + H(+)</text>
        <dbReference type="Rhea" id="RHEA:11096"/>
        <dbReference type="ChEBI" id="CHEBI:15378"/>
        <dbReference type="ChEBI" id="CHEBI:57597"/>
        <dbReference type="ChEBI" id="CHEBI:57642"/>
        <dbReference type="ChEBI" id="CHEBI:57783"/>
        <dbReference type="ChEBI" id="CHEBI:58349"/>
        <dbReference type="EC" id="1.1.1.94"/>
    </reaction>
    <physiologicalReaction direction="right-to-left" evidence="1">
        <dbReference type="Rhea" id="RHEA:11098"/>
    </physiologicalReaction>
</comment>
<comment type="pathway">
    <text evidence="1">Membrane lipid metabolism; glycerophospholipid metabolism.</text>
</comment>
<comment type="subcellular location">
    <subcellularLocation>
        <location evidence="1">Cytoplasm</location>
    </subcellularLocation>
</comment>
<comment type="similarity">
    <text evidence="1">Belongs to the NAD-dependent glycerol-3-phosphate dehydrogenase family.</text>
</comment>
<accession>Q0I0Q3</accession>
<keyword id="KW-0963">Cytoplasm</keyword>
<keyword id="KW-0444">Lipid biosynthesis</keyword>
<keyword id="KW-0443">Lipid metabolism</keyword>
<keyword id="KW-0520">NAD</keyword>
<keyword id="KW-0521">NADP</keyword>
<keyword id="KW-0547">Nucleotide-binding</keyword>
<keyword id="KW-0560">Oxidoreductase</keyword>
<keyword id="KW-0594">Phospholipid biosynthesis</keyword>
<keyword id="KW-1208">Phospholipid metabolism</keyword>
<proteinExistence type="inferred from homology"/>
<name>GPDA_SHESR</name>
<sequence length="338" mass="35765">MKNSADITVLGAGSYGTALAISLASNGHKTLLWGHDPAHMQTLAQDKCNQAFLPGIAFPECLHIEADLAKALAASNNVLVVVPSHVFGSVLAQAKPLLRQDARIVWATKGLEPETGRLLQDVARDVLGEQYPLAVLSGPTFAKELAMGLPTAISVAGTCPKFTAELVELLHSPKRLRVYANDDFIGLQLGGAVKNVIAIGAGMSDGIGFGANARTALITRGLVELTRLGEALGASTATFMGMAGLGDLVLTCTDNQSRNRRFGLALGKGCDVDTAQAEIGQVVEGYRNTKEVFTLAKRMGVEMPITEQIYQVLYQGKAPLDAAKELLSREKKSETPAQ</sequence>
<protein>
    <recommendedName>
        <fullName evidence="1">Glycerol-3-phosphate dehydrogenase [NAD(P)+]</fullName>
        <ecNumber evidence="1">1.1.1.94</ecNumber>
    </recommendedName>
    <alternativeName>
        <fullName evidence="1">NAD(P)(+)-dependent glycerol-3-phosphate dehydrogenase</fullName>
    </alternativeName>
    <alternativeName>
        <fullName evidence="1">NAD(P)H-dependent dihydroxyacetone-phosphate reductase</fullName>
    </alternativeName>
</protein>
<organism>
    <name type="scientific">Shewanella sp. (strain MR-7)</name>
    <dbReference type="NCBI Taxonomy" id="60481"/>
    <lineage>
        <taxon>Bacteria</taxon>
        <taxon>Pseudomonadati</taxon>
        <taxon>Pseudomonadota</taxon>
        <taxon>Gammaproteobacteria</taxon>
        <taxon>Alteromonadales</taxon>
        <taxon>Shewanellaceae</taxon>
        <taxon>Shewanella</taxon>
    </lineage>
</organism>